<accession>P0CN43</accession>
<accession>Q55S53</accession>
<accession>Q5KGK5</accession>
<comment type="function">
    <text evidence="1">RNA-binding component of the eukaryotic translation initiation factor 3 (eIF-3) complex, which is involved in protein synthesis of a specialized repertoire of mRNAs and, together with other initiation factors, stimulates binding of mRNA and methionyl-tRNAi to the 40S ribosome. The eIF-3 complex specifically targets and initiates translation of a subset of mRNAs involved in cell proliferation.</text>
</comment>
<comment type="subunit">
    <text evidence="1">Component of the eukaryotic translation initiation factor 3 (eIF-3) complex.</text>
</comment>
<comment type="subcellular location">
    <subcellularLocation>
        <location evidence="1">Cytoplasm</location>
    </subcellularLocation>
</comment>
<comment type="similarity">
    <text evidence="1">Belongs to the eIF-3 subunit A family.</text>
</comment>
<keyword id="KW-0175">Coiled coil</keyword>
<keyword id="KW-0963">Cytoplasm</keyword>
<keyword id="KW-0396">Initiation factor</keyword>
<keyword id="KW-0648">Protein biosynthesis</keyword>
<keyword id="KW-0694">RNA-binding</keyword>
<organism>
    <name type="scientific">Cryptococcus neoformans var. neoformans serotype D (strain B-3501A)</name>
    <name type="common">Filobasidiella neoformans</name>
    <dbReference type="NCBI Taxonomy" id="283643"/>
    <lineage>
        <taxon>Eukaryota</taxon>
        <taxon>Fungi</taxon>
        <taxon>Dikarya</taxon>
        <taxon>Basidiomycota</taxon>
        <taxon>Agaricomycotina</taxon>
        <taxon>Tremellomycetes</taxon>
        <taxon>Tremellales</taxon>
        <taxon>Cryptococcaceae</taxon>
        <taxon>Cryptococcus</taxon>
        <taxon>Cryptococcus neoformans species complex</taxon>
    </lineage>
</organism>
<protein>
    <recommendedName>
        <fullName evidence="1">Eukaryotic translation initiation factor 3 subunit A</fullName>
        <shortName evidence="1">eIF3a</shortName>
    </recommendedName>
    <alternativeName>
        <fullName evidence="1">Eukaryotic translation initiation factor 3 110 kDa subunit homolog</fullName>
        <shortName evidence="1">eIF3 p110</shortName>
    </alternativeName>
    <alternativeName>
        <fullName evidence="1">Translation initiation factor eIF3, p110 subunit homolog</fullName>
    </alternativeName>
</protein>
<name>EIF3A_CRYNB</name>
<feature type="chain" id="PRO_0000410075" description="Eukaryotic translation initiation factor 3 subunit A">
    <location>
        <begin position="1"/>
        <end position="952"/>
    </location>
</feature>
<feature type="domain" description="PCI" evidence="2">
    <location>
        <begin position="315"/>
        <end position="491"/>
    </location>
</feature>
<feature type="region of interest" description="Disordered" evidence="3">
    <location>
        <begin position="757"/>
        <end position="952"/>
    </location>
</feature>
<feature type="coiled-coil region" evidence="1">
    <location>
        <begin position="522"/>
        <end position="849"/>
    </location>
</feature>
<feature type="compositionally biased region" description="Basic and acidic residues" evidence="3">
    <location>
        <begin position="757"/>
        <end position="797"/>
    </location>
</feature>
<feature type="compositionally biased region" description="Low complexity" evidence="3">
    <location>
        <begin position="798"/>
        <end position="809"/>
    </location>
</feature>
<feature type="compositionally biased region" description="Basic and acidic residues" evidence="3">
    <location>
        <begin position="810"/>
        <end position="844"/>
    </location>
</feature>
<feature type="compositionally biased region" description="Low complexity" evidence="3">
    <location>
        <begin position="856"/>
        <end position="878"/>
    </location>
</feature>
<feature type="compositionally biased region" description="Low complexity" evidence="3">
    <location>
        <begin position="893"/>
        <end position="918"/>
    </location>
</feature>
<sequence length="952" mass="106269">MPPIYVKPENALKRSEELLALGTPQSQQQAFDNLVEVFQSKRFKQTPINVLEPIVTKFIDLCVVLSRKAHAKSGLLVFKSAAQTTNVGAIERVLNHFIAKAEARLAAAVEQAKKEVAALPDVPVVDDDLPLQPASLMLDCFVDSAGDRERIERRLIAPAQKFCWDSYDICLDIAKSNDRLEVIYQSIAHRAFHFCKIHQRKADFRRLCEQRLRKDLANAAKYSHQQHAINLSDPETLGRFLDTRFLQLETAVELELWQEAFRSIEDVHGLIAGRKGTKPSMMANYYEKLTQIFKAEGGKQTAVFHAAAWARYFQHAERAGIVNDKASGCVLLSALAVPLGEVEVKQRLVALLNLPKTPTREALVQDAAAKHLKRVPADIRQIYKILEVDFEPTTASKVLAPLITSLSPEYQPYLPALRDVVLSRLLQALAQVYDSVTLSHILDLVKPLDNTPWATDMSSLEKFLVTACRRGDIRASVDHVAQTITFVSTPPDANGLQTLAVCLYNTIQYLNPSRLAPVSRSDAFAAAIAQAEEERKAASHKRQIVIRRRELLEEAKLRREKEASTALAERLKIKAEEDARRAKEEAKQAEIDRVRKQIHETKQAEAKQLAASLAAQGALKVDISSIEDLDSSKLVAMQVEQLAKEKKELSERLRIVGKRVDHLERAMRKEERPLLAQDYERQKAEDRAAHDRANQIAREQAIEQQRAARELKQRLGRMLEDYEAVKERIESQMQEELKAAKEEARRKIEEEKAQLREKVIKRKREEKERKLKEAREAEERKRKEEEEAAQKAEEEARAAAALEAEAAAAEQRRAEREAQRQSDLERIRAQQEREEEALRRRQAEKAAATSGGSAYRPPARAGTTPPTASPAPSSGGPSWLARRKAMEAQSAGGAPVASSPKPVPSNSAAASAPASNGPESIAGEAEKPALTGSVWRRGMGARRGMPSTRGGA</sequence>
<gene>
    <name evidence="1" type="primary">TIF32</name>
    <name type="ordered locus">CNBE3290</name>
</gene>
<evidence type="ECO:0000255" key="1">
    <source>
        <dbReference type="HAMAP-Rule" id="MF_03000"/>
    </source>
</evidence>
<evidence type="ECO:0000255" key="2">
    <source>
        <dbReference type="PROSITE-ProRule" id="PRU01185"/>
    </source>
</evidence>
<evidence type="ECO:0000256" key="3">
    <source>
        <dbReference type="SAM" id="MobiDB-lite"/>
    </source>
</evidence>
<proteinExistence type="inferred from homology"/>
<dbReference type="EMBL" id="AAEY01000026">
    <property type="protein sequence ID" value="EAL20621.1"/>
    <property type="molecule type" value="Genomic_DNA"/>
</dbReference>
<dbReference type="RefSeq" id="XP_775268.1">
    <property type="nucleotide sequence ID" value="XM_770175.1"/>
</dbReference>
<dbReference type="SMR" id="P0CN43"/>
<dbReference type="EnsemblFungi" id="AAW43583">
    <property type="protein sequence ID" value="AAW43583"/>
    <property type="gene ID" value="CNE03290"/>
</dbReference>
<dbReference type="GeneID" id="4936339"/>
<dbReference type="KEGG" id="cnb:CNBE3290"/>
<dbReference type="VEuPathDB" id="FungiDB:CNBE3290"/>
<dbReference type="HOGENOM" id="CLU_002096_2_1_1"/>
<dbReference type="OrthoDB" id="9423at5206"/>
<dbReference type="GO" id="GO:0010494">
    <property type="term" value="C:cytoplasmic stress granule"/>
    <property type="evidence" value="ECO:0007669"/>
    <property type="project" value="EnsemblFungi"/>
</dbReference>
<dbReference type="GO" id="GO:0016282">
    <property type="term" value="C:eukaryotic 43S preinitiation complex"/>
    <property type="evidence" value="ECO:0007669"/>
    <property type="project" value="UniProtKB-UniRule"/>
</dbReference>
<dbReference type="GO" id="GO:0033290">
    <property type="term" value="C:eukaryotic 48S preinitiation complex"/>
    <property type="evidence" value="ECO:0007669"/>
    <property type="project" value="UniProtKB-UniRule"/>
</dbReference>
<dbReference type="GO" id="GO:0071540">
    <property type="term" value="C:eukaryotic translation initiation factor 3 complex, eIF3e"/>
    <property type="evidence" value="ECO:0007669"/>
    <property type="project" value="EnsemblFungi"/>
</dbReference>
<dbReference type="GO" id="GO:0071541">
    <property type="term" value="C:eukaryotic translation initiation factor 3 complex, eIF3m"/>
    <property type="evidence" value="ECO:0007669"/>
    <property type="project" value="EnsemblFungi"/>
</dbReference>
<dbReference type="GO" id="GO:0043614">
    <property type="term" value="C:multi-eIF complex"/>
    <property type="evidence" value="ECO:0007669"/>
    <property type="project" value="TreeGrafter"/>
</dbReference>
<dbReference type="GO" id="GO:0003729">
    <property type="term" value="F:mRNA binding"/>
    <property type="evidence" value="ECO:0007669"/>
    <property type="project" value="TreeGrafter"/>
</dbReference>
<dbReference type="GO" id="GO:0003743">
    <property type="term" value="F:translation initiation factor activity"/>
    <property type="evidence" value="ECO:0007669"/>
    <property type="project" value="UniProtKB-UniRule"/>
</dbReference>
<dbReference type="GO" id="GO:0001732">
    <property type="term" value="P:formation of cytoplasmic translation initiation complex"/>
    <property type="evidence" value="ECO:0007669"/>
    <property type="project" value="UniProtKB-UniRule"/>
</dbReference>
<dbReference type="GO" id="GO:0002188">
    <property type="term" value="P:translation reinitiation"/>
    <property type="evidence" value="ECO:0007669"/>
    <property type="project" value="TreeGrafter"/>
</dbReference>
<dbReference type="FunFam" id="1.25.40.860:FF:000010">
    <property type="entry name" value="Eukaryotic translation initiation factor 3 subunit A"/>
    <property type="match status" value="1"/>
</dbReference>
<dbReference type="FunFam" id="4.10.860.10:FF:000001">
    <property type="entry name" value="Eukaryotic translation initiation factor 3 subunit A"/>
    <property type="match status" value="1"/>
</dbReference>
<dbReference type="Gene3D" id="1.25.40.860">
    <property type="match status" value="1"/>
</dbReference>
<dbReference type="Gene3D" id="4.10.860.10">
    <property type="entry name" value="UVR domain"/>
    <property type="match status" value="1"/>
</dbReference>
<dbReference type="HAMAP" id="MF_03000">
    <property type="entry name" value="eIF3a"/>
    <property type="match status" value="1"/>
</dbReference>
<dbReference type="InterPro" id="IPR027512">
    <property type="entry name" value="EIF3A"/>
</dbReference>
<dbReference type="InterPro" id="IPR054711">
    <property type="entry name" value="eIF3a_PCI_TPR-like"/>
</dbReference>
<dbReference type="InterPro" id="IPR000717">
    <property type="entry name" value="PCI_dom"/>
</dbReference>
<dbReference type="PANTHER" id="PTHR14005:SF0">
    <property type="entry name" value="EUKARYOTIC TRANSLATION INITIATION FACTOR 3 SUBUNIT A"/>
    <property type="match status" value="1"/>
</dbReference>
<dbReference type="PANTHER" id="PTHR14005">
    <property type="entry name" value="EUKARYOTIC TRANSLATION INITIATION FACTOR 3, THETA SUBUNIT"/>
    <property type="match status" value="1"/>
</dbReference>
<dbReference type="Pfam" id="PF22591">
    <property type="entry name" value="eIF3a_PCI_TPR-like"/>
    <property type="match status" value="1"/>
</dbReference>
<dbReference type="Pfam" id="PF01399">
    <property type="entry name" value="PCI"/>
    <property type="match status" value="1"/>
</dbReference>
<dbReference type="SMART" id="SM00088">
    <property type="entry name" value="PINT"/>
    <property type="match status" value="1"/>
</dbReference>
<dbReference type="PROSITE" id="PS50250">
    <property type="entry name" value="PCI"/>
    <property type="match status" value="1"/>
</dbReference>
<reference key="1">
    <citation type="journal article" date="2005" name="Science">
        <title>The genome of the basidiomycetous yeast and human pathogen Cryptococcus neoformans.</title>
        <authorList>
            <person name="Loftus B.J."/>
            <person name="Fung E."/>
            <person name="Roncaglia P."/>
            <person name="Rowley D."/>
            <person name="Amedeo P."/>
            <person name="Bruno D."/>
            <person name="Vamathevan J."/>
            <person name="Miranda M."/>
            <person name="Anderson I.J."/>
            <person name="Fraser J.A."/>
            <person name="Allen J.E."/>
            <person name="Bosdet I.E."/>
            <person name="Brent M.R."/>
            <person name="Chiu R."/>
            <person name="Doering T.L."/>
            <person name="Donlin M.J."/>
            <person name="D'Souza C.A."/>
            <person name="Fox D.S."/>
            <person name="Grinberg V."/>
            <person name="Fu J."/>
            <person name="Fukushima M."/>
            <person name="Haas B.J."/>
            <person name="Huang J.C."/>
            <person name="Janbon G."/>
            <person name="Jones S.J.M."/>
            <person name="Koo H.L."/>
            <person name="Krzywinski M.I."/>
            <person name="Kwon-Chung K.J."/>
            <person name="Lengeler K.B."/>
            <person name="Maiti R."/>
            <person name="Marra M.A."/>
            <person name="Marra R.E."/>
            <person name="Mathewson C.A."/>
            <person name="Mitchell T.G."/>
            <person name="Pertea M."/>
            <person name="Riggs F.R."/>
            <person name="Salzberg S.L."/>
            <person name="Schein J.E."/>
            <person name="Shvartsbeyn A."/>
            <person name="Shin H."/>
            <person name="Shumway M."/>
            <person name="Specht C.A."/>
            <person name="Suh B.B."/>
            <person name="Tenney A."/>
            <person name="Utterback T.R."/>
            <person name="Wickes B.L."/>
            <person name="Wortman J.R."/>
            <person name="Wye N.H."/>
            <person name="Kronstad J.W."/>
            <person name="Lodge J.K."/>
            <person name="Heitman J."/>
            <person name="Davis R.W."/>
            <person name="Fraser C.M."/>
            <person name="Hyman R.W."/>
        </authorList>
    </citation>
    <scope>NUCLEOTIDE SEQUENCE [LARGE SCALE GENOMIC DNA]</scope>
    <source>
        <strain>B-3501A</strain>
    </source>
</reference>